<accession>A8MZH6</accession>
<comment type="function">
    <text evidence="1">May be involved in cell differentiation.</text>
</comment>
<comment type="subcellular location">
    <subcellularLocation>
        <location evidence="3">Secreted</location>
    </subcellularLocation>
</comment>
<comment type="similarity">
    <text evidence="3">Belongs to the PLAC1 family.</text>
</comment>
<comment type="caution">
    <text evidence="3">Could be the product of a pseudogene.</text>
</comment>
<organism>
    <name type="scientific">Homo sapiens</name>
    <name type="common">Human</name>
    <dbReference type="NCBI Taxonomy" id="9606"/>
    <lineage>
        <taxon>Eukaryota</taxon>
        <taxon>Metazoa</taxon>
        <taxon>Chordata</taxon>
        <taxon>Craniata</taxon>
        <taxon>Vertebrata</taxon>
        <taxon>Euteleostomi</taxon>
        <taxon>Mammalia</taxon>
        <taxon>Eutheria</taxon>
        <taxon>Euarchontoglires</taxon>
        <taxon>Primates</taxon>
        <taxon>Haplorrhini</taxon>
        <taxon>Catarrhini</taxon>
        <taxon>Hominidae</taxon>
        <taxon>Homo</taxon>
    </lineage>
</organism>
<proteinExistence type="uncertain"/>
<sequence length="123" mass="14433">MKTILGFKGLFYLHSLIWTCAGDWSAIQVHCTQFWFFARIKPTIFYNLYVNPDEVFLGDGCHVTHVLPNVYYEFFYHPHDCGIVTQPLQEVLLLKTKIRYISRDSTVRSEMPLSCVVHKQKCQ</sequence>
<name>OOSP1_HUMAN</name>
<reference key="1">
    <citation type="journal article" date="2006" name="Nature">
        <title>Human chromosome 11 DNA sequence and analysis including novel gene identification.</title>
        <authorList>
            <person name="Taylor T.D."/>
            <person name="Noguchi H."/>
            <person name="Totoki Y."/>
            <person name="Toyoda A."/>
            <person name="Kuroki Y."/>
            <person name="Dewar K."/>
            <person name="Lloyd C."/>
            <person name="Itoh T."/>
            <person name="Takeda T."/>
            <person name="Kim D.-W."/>
            <person name="She X."/>
            <person name="Barlow K.F."/>
            <person name="Bloom T."/>
            <person name="Bruford E."/>
            <person name="Chang J.L."/>
            <person name="Cuomo C.A."/>
            <person name="Eichler E."/>
            <person name="FitzGerald M.G."/>
            <person name="Jaffe D.B."/>
            <person name="LaButti K."/>
            <person name="Nicol R."/>
            <person name="Park H.-S."/>
            <person name="Seaman C."/>
            <person name="Sougnez C."/>
            <person name="Yang X."/>
            <person name="Zimmer A.R."/>
            <person name="Zody M.C."/>
            <person name="Birren B.W."/>
            <person name="Nusbaum C."/>
            <person name="Fujiyama A."/>
            <person name="Hattori M."/>
            <person name="Rogers J."/>
            <person name="Lander E.S."/>
            <person name="Sakaki Y."/>
        </authorList>
    </citation>
    <scope>NUCLEOTIDE SEQUENCE [LARGE SCALE GENOMIC DNA]</scope>
</reference>
<dbReference type="EMBL" id="AP000790">
    <property type="status" value="NOT_ANNOTATED_CDS"/>
    <property type="molecule type" value="Genomic_DNA"/>
</dbReference>
<dbReference type="SMR" id="A8MZH6"/>
<dbReference type="STRING" id="9606.ENSP00000494485"/>
<dbReference type="BioMuta" id="HGNC:49233"/>
<dbReference type="AGR" id="HGNC:49233"/>
<dbReference type="GeneCards" id="OOSP1"/>
<dbReference type="HGNC" id="HGNC:49233">
    <property type="gene designation" value="OOSP1"/>
</dbReference>
<dbReference type="MIM" id="621111">
    <property type="type" value="gene"/>
</dbReference>
<dbReference type="neXtProt" id="NX_A8MZH6"/>
<dbReference type="InParanoid" id="A8MZH6"/>
<dbReference type="OrthoDB" id="9715999at2759"/>
<dbReference type="PAN-GO" id="A8MZH6">
    <property type="GO annotations" value="0 GO annotations based on evolutionary models"/>
</dbReference>
<dbReference type="PhylomeDB" id="A8MZH6"/>
<dbReference type="ChiTaRS" id="OOSP1">
    <property type="organism name" value="human"/>
</dbReference>
<dbReference type="Pharos" id="A8MZH6">
    <property type="development level" value="Tdark"/>
</dbReference>
<dbReference type="Proteomes" id="UP000005640">
    <property type="component" value="Unplaced"/>
</dbReference>
<dbReference type="RNAct" id="A8MZH6">
    <property type="molecule type" value="protein"/>
</dbReference>
<dbReference type="GO" id="GO:0005576">
    <property type="term" value="C:extracellular region"/>
    <property type="evidence" value="ECO:0007669"/>
    <property type="project" value="UniProtKB-SubCell"/>
</dbReference>
<dbReference type="Gene3D" id="2.60.40.3210">
    <property type="entry name" value="Zona pellucida, ZP-N domain"/>
    <property type="match status" value="1"/>
</dbReference>
<dbReference type="InterPro" id="IPR033222">
    <property type="entry name" value="PLAC1_fam"/>
</dbReference>
<dbReference type="PANTHER" id="PTHR14380:SF3">
    <property type="entry name" value="OOCYTE-SECRETED PROTEIN 1"/>
    <property type="match status" value="1"/>
</dbReference>
<dbReference type="PANTHER" id="PTHR14380">
    <property type="entry name" value="PLACENTA-SPECIFIC PROTEIN 1"/>
    <property type="match status" value="1"/>
</dbReference>
<protein>
    <recommendedName>
        <fullName>Putative oocyte-secreted protein 1 homolog</fullName>
    </recommendedName>
</protein>
<gene>
    <name type="primary">OOSP1</name>
</gene>
<keyword id="KW-1185">Reference proteome</keyword>
<keyword id="KW-0964">Secreted</keyword>
<keyword id="KW-0732">Signal</keyword>
<evidence type="ECO:0000250" key="1"/>
<evidence type="ECO:0000255" key="2"/>
<evidence type="ECO:0000305" key="3"/>
<feature type="signal peptide" evidence="2">
    <location>
        <begin position="1"/>
        <end position="26"/>
    </location>
</feature>
<feature type="chain" id="PRO_0000343688" description="Putative oocyte-secreted protein 1 homolog">
    <location>
        <begin position="27"/>
        <end position="123"/>
    </location>
</feature>